<keyword id="KW-0010">Activator</keyword>
<keyword id="KW-0970">Cilium biogenesis/degradation</keyword>
<keyword id="KW-0238">DNA-binding</keyword>
<keyword id="KW-0539">Nucleus</keyword>
<keyword id="KW-1185">Reference proteome</keyword>
<keyword id="KW-0804">Transcription</keyword>
<keyword id="KW-0805">Transcription regulation</keyword>
<sequence length="421" mass="45474">MAESWLRLCGAGPGEEAGPEGGMEEPDALDDSLTSLQWLQEFSILNAKAPTLPPGGTDPHGYHQVPGLVAPGSPLAADPACLGQPHTPGKPTSSCTSRSAPPGLQAPPPDDVDYATNPHVKPPYSYATLICMAMQASKATKITLSAIYKWITDNFCYFRHADPTWQNSIRHNLSLNKCFIKVPREKDEPGKGGFWRIDPQYAERLLSGAFKKRRLPPVHIHPAFARQASQEPSAAPWGGPLTVNREAQQLLQEFEEATGEGGWGTGEGRLGHKRKQPLPKRVAKVLRPPSTLLLTQEEQGELEPLKGNFDWEAIFEAGALGEELSSLEGLELSPPLSPSSHGDVDLTVHGRHINCPATWGPPAEQAADSLDFDETFLATSFLQHPWDESGSGCLPPEPIFEAGDATLAADLQDWASVGAFL</sequence>
<accession>Q61660</accession>
<accession>Q3US42</accession>
<gene>
    <name evidence="14" type="primary">Foxj1</name>
    <name evidence="11" type="synonym">Hfh4</name>
</gene>
<protein>
    <recommendedName>
        <fullName evidence="12">Forkhead box protein J1</fullName>
    </recommendedName>
    <alternativeName>
        <fullName evidence="11">Hepatocyte nuclear factor 3 forkhead homolog 4</fullName>
        <shortName evidence="11">HFH-4</shortName>
    </alternativeName>
</protein>
<dbReference type="EMBL" id="L13204">
    <property type="protein sequence ID" value="AAA21689.1"/>
    <property type="molecule type" value="mRNA"/>
</dbReference>
<dbReference type="EMBL" id="AK140847">
    <property type="protein sequence ID" value="BAE24495.1"/>
    <property type="molecule type" value="mRNA"/>
</dbReference>
<dbReference type="EMBL" id="AL645861">
    <property type="status" value="NOT_ANNOTATED_CDS"/>
    <property type="molecule type" value="Genomic_DNA"/>
</dbReference>
<dbReference type="EMBL" id="CH466558">
    <property type="protein sequence ID" value="EDL34572.1"/>
    <property type="molecule type" value="Genomic_DNA"/>
</dbReference>
<dbReference type="CCDS" id="CCDS25665.1"/>
<dbReference type="PIR" id="I49734">
    <property type="entry name" value="I49734"/>
</dbReference>
<dbReference type="RefSeq" id="NP_001418488.1">
    <property type="nucleotide sequence ID" value="NM_001431559.1"/>
</dbReference>
<dbReference type="RefSeq" id="NP_032266.3">
    <property type="nucleotide sequence ID" value="NM_008240.3"/>
</dbReference>
<dbReference type="RefSeq" id="XP_006532332.1">
    <property type="nucleotide sequence ID" value="XM_006532269.2"/>
</dbReference>
<dbReference type="SMR" id="Q61660"/>
<dbReference type="BioGRID" id="200289">
    <property type="interactions" value="1"/>
</dbReference>
<dbReference type="FunCoup" id="Q61660">
    <property type="interactions" value="982"/>
</dbReference>
<dbReference type="IntAct" id="Q61660">
    <property type="interactions" value="1"/>
</dbReference>
<dbReference type="STRING" id="10090.ENSMUSP00000038351"/>
<dbReference type="iPTMnet" id="Q61660"/>
<dbReference type="PhosphoSitePlus" id="Q61660"/>
<dbReference type="PaxDb" id="10090-ENSMUSP00000038351"/>
<dbReference type="ProteomicsDB" id="267497"/>
<dbReference type="Pumba" id="Q61660"/>
<dbReference type="Antibodypedia" id="1443">
    <property type="antibodies" value="246 antibodies from 33 providers"/>
</dbReference>
<dbReference type="DNASU" id="15223"/>
<dbReference type="Ensembl" id="ENSMUST00000036215.8">
    <property type="protein sequence ID" value="ENSMUSP00000038351.7"/>
    <property type="gene ID" value="ENSMUSG00000034227.8"/>
</dbReference>
<dbReference type="GeneID" id="15223"/>
<dbReference type="KEGG" id="mmu:15223"/>
<dbReference type="UCSC" id="uc007mkv.2">
    <property type="organism name" value="mouse"/>
</dbReference>
<dbReference type="AGR" id="MGI:1347474"/>
<dbReference type="CTD" id="2302"/>
<dbReference type="MGI" id="MGI:1347474">
    <property type="gene designation" value="Foxj1"/>
</dbReference>
<dbReference type="VEuPathDB" id="HostDB:ENSMUSG00000034227"/>
<dbReference type="eggNOG" id="KOG2294">
    <property type="taxonomic scope" value="Eukaryota"/>
</dbReference>
<dbReference type="GeneTree" id="ENSGT00940000156895"/>
<dbReference type="HOGENOM" id="CLU_050055_0_0_1"/>
<dbReference type="InParanoid" id="Q61660"/>
<dbReference type="OMA" id="WARPLTV"/>
<dbReference type="OrthoDB" id="5954824at2759"/>
<dbReference type="PhylomeDB" id="Q61660"/>
<dbReference type="TreeFam" id="TF333250"/>
<dbReference type="BioGRID-ORCS" id="15223">
    <property type="hits" value="3 hits in 78 CRISPR screens"/>
</dbReference>
<dbReference type="ChiTaRS" id="Foxj1">
    <property type="organism name" value="mouse"/>
</dbReference>
<dbReference type="PRO" id="PR:Q61660"/>
<dbReference type="Proteomes" id="UP000000589">
    <property type="component" value="Chromosome 11"/>
</dbReference>
<dbReference type="RNAct" id="Q61660">
    <property type="molecule type" value="protein"/>
</dbReference>
<dbReference type="Bgee" id="ENSMUSG00000034227">
    <property type="expression patterns" value="Expressed in choroid plexus of fourth ventricle and 102 other cell types or tissues"/>
</dbReference>
<dbReference type="GO" id="GO:0005634">
    <property type="term" value="C:nucleus"/>
    <property type="evidence" value="ECO:0000314"/>
    <property type="project" value="UniProtKB"/>
</dbReference>
<dbReference type="GO" id="GO:0001228">
    <property type="term" value="F:DNA-binding transcription activator activity, RNA polymerase II-specific"/>
    <property type="evidence" value="ECO:0000314"/>
    <property type="project" value="UniProtKB"/>
</dbReference>
<dbReference type="GO" id="GO:0000978">
    <property type="term" value="F:RNA polymerase II cis-regulatory region sequence-specific DNA binding"/>
    <property type="evidence" value="ECO:0000314"/>
    <property type="project" value="NTNU_SB"/>
</dbReference>
<dbReference type="GO" id="GO:0030036">
    <property type="term" value="P:actin cytoskeleton organization"/>
    <property type="evidence" value="ECO:0000315"/>
    <property type="project" value="BHF-UCL"/>
</dbReference>
<dbReference type="GO" id="GO:0035082">
    <property type="term" value="P:axoneme assembly"/>
    <property type="evidence" value="ECO:0000250"/>
    <property type="project" value="UniProtKB"/>
</dbReference>
<dbReference type="GO" id="GO:0007420">
    <property type="term" value="P:brain development"/>
    <property type="evidence" value="ECO:0000270"/>
    <property type="project" value="BHF-UCL"/>
</dbReference>
<dbReference type="GO" id="GO:0048469">
    <property type="term" value="P:cell maturation"/>
    <property type="evidence" value="ECO:0000314"/>
    <property type="project" value="MGI"/>
</dbReference>
<dbReference type="GO" id="GO:0002508">
    <property type="term" value="P:central tolerance induction"/>
    <property type="evidence" value="ECO:0000315"/>
    <property type="project" value="BHF-UCL"/>
</dbReference>
<dbReference type="GO" id="GO:0032053">
    <property type="term" value="P:ciliary basal body organization"/>
    <property type="evidence" value="ECO:0000250"/>
    <property type="project" value="UniProtKB"/>
</dbReference>
<dbReference type="GO" id="GO:0060271">
    <property type="term" value="P:cilium assembly"/>
    <property type="evidence" value="ECO:0000315"/>
    <property type="project" value="UniProtKB"/>
</dbReference>
<dbReference type="GO" id="GO:0007368">
    <property type="term" value="P:determination of left/right symmetry"/>
    <property type="evidence" value="ECO:0000315"/>
    <property type="project" value="MGI"/>
</dbReference>
<dbReference type="GO" id="GO:0060429">
    <property type="term" value="P:epithelium development"/>
    <property type="evidence" value="ECO:0000270"/>
    <property type="project" value="BHF-UCL"/>
</dbReference>
<dbReference type="GO" id="GO:0035089">
    <property type="term" value="P:establishment of apical/basal cell polarity"/>
    <property type="evidence" value="ECO:0000315"/>
    <property type="project" value="MGI"/>
</dbReference>
<dbReference type="GO" id="GO:0072016">
    <property type="term" value="P:glomerular parietal epithelial cell development"/>
    <property type="evidence" value="ECO:0007669"/>
    <property type="project" value="Ensembl"/>
</dbReference>
<dbReference type="GO" id="GO:0007507">
    <property type="term" value="P:heart development"/>
    <property type="evidence" value="ECO:0000315"/>
    <property type="project" value="MGI"/>
</dbReference>
<dbReference type="GO" id="GO:0006959">
    <property type="term" value="P:humoral immune response"/>
    <property type="evidence" value="ECO:0000315"/>
    <property type="project" value="BHF-UCL"/>
</dbReference>
<dbReference type="GO" id="GO:0060972">
    <property type="term" value="P:left/right pattern formation"/>
    <property type="evidence" value="ECO:0000315"/>
    <property type="project" value="MGI"/>
</dbReference>
<dbReference type="GO" id="GO:0050900">
    <property type="term" value="P:leukocyte migration"/>
    <property type="evidence" value="ECO:0000315"/>
    <property type="project" value="BHF-UCL"/>
</dbReference>
<dbReference type="GO" id="GO:0060428">
    <property type="term" value="P:lung epithelium development"/>
    <property type="evidence" value="ECO:0007669"/>
    <property type="project" value="Ensembl"/>
</dbReference>
<dbReference type="GO" id="GO:0035502">
    <property type="term" value="P:metanephric part of ureteric bud development"/>
    <property type="evidence" value="ECO:0007669"/>
    <property type="project" value="Ensembl"/>
</dbReference>
<dbReference type="GO" id="GO:0044458">
    <property type="term" value="P:motile cilium assembly"/>
    <property type="evidence" value="ECO:0000315"/>
    <property type="project" value="UniProtKB"/>
</dbReference>
<dbReference type="GO" id="GO:0050869">
    <property type="term" value="P:negative regulation of B cell activation"/>
    <property type="evidence" value="ECO:0000315"/>
    <property type="project" value="BHF-UCL"/>
</dbReference>
<dbReference type="GO" id="GO:0002635">
    <property type="term" value="P:negative regulation of germinal center formation"/>
    <property type="evidence" value="ECO:0000315"/>
    <property type="project" value="BHF-UCL"/>
</dbReference>
<dbReference type="GO" id="GO:0002924">
    <property type="term" value="P:negative regulation of humoral immune response mediated by circulating immunoglobulin"/>
    <property type="evidence" value="ECO:0000315"/>
    <property type="project" value="BHF-UCL"/>
</dbReference>
<dbReference type="GO" id="GO:0032715">
    <property type="term" value="P:negative regulation of interleukin-6 production"/>
    <property type="evidence" value="ECO:0000315"/>
    <property type="project" value="BHF-UCL"/>
</dbReference>
<dbReference type="GO" id="GO:1901223">
    <property type="term" value="P:negative regulation of non-canonical NF-kappaB signal transduction"/>
    <property type="evidence" value="ECO:0000315"/>
    <property type="project" value="BHF-UCL"/>
</dbReference>
<dbReference type="GO" id="GO:0033085">
    <property type="term" value="P:negative regulation of T cell differentiation in thymus"/>
    <property type="evidence" value="ECO:0000315"/>
    <property type="project" value="BHF-UCL"/>
</dbReference>
<dbReference type="GO" id="GO:0042130">
    <property type="term" value="P:negative regulation of T cell proliferation"/>
    <property type="evidence" value="ECO:0000315"/>
    <property type="project" value="BHF-UCL"/>
</dbReference>
<dbReference type="GO" id="GO:0000122">
    <property type="term" value="P:negative regulation of transcription by RNA polymerase II"/>
    <property type="evidence" value="ECO:0000315"/>
    <property type="project" value="BHF-UCL"/>
</dbReference>
<dbReference type="GO" id="GO:0002897">
    <property type="term" value="P:positive regulation of central B cell tolerance induction"/>
    <property type="evidence" value="ECO:0000315"/>
    <property type="project" value="BHF-UCL"/>
</dbReference>
<dbReference type="GO" id="GO:0045893">
    <property type="term" value="P:positive regulation of DNA-templated transcription"/>
    <property type="evidence" value="ECO:0000315"/>
    <property type="project" value="UniProtKB"/>
</dbReference>
<dbReference type="GO" id="GO:1901248">
    <property type="term" value="P:positive regulation of lung ciliated cell differentiation"/>
    <property type="evidence" value="ECO:0007669"/>
    <property type="project" value="Ensembl"/>
</dbReference>
<dbReference type="GO" id="GO:0045944">
    <property type="term" value="P:positive regulation of transcription by RNA polymerase II"/>
    <property type="evidence" value="ECO:0000314"/>
    <property type="project" value="UniProtKB"/>
</dbReference>
<dbReference type="GO" id="GO:0008104">
    <property type="term" value="P:protein localization"/>
    <property type="evidence" value="ECO:0000250"/>
    <property type="project" value="UniProtKB"/>
</dbReference>
<dbReference type="GO" id="GO:0030856">
    <property type="term" value="P:regulation of epithelial cell differentiation"/>
    <property type="evidence" value="ECO:0000314"/>
    <property type="project" value="MGI"/>
</dbReference>
<dbReference type="CDD" id="cd20023">
    <property type="entry name" value="FH_FOXJ1"/>
    <property type="match status" value="1"/>
</dbReference>
<dbReference type="FunFam" id="1.10.10.10:FF:000030">
    <property type="entry name" value="Forkhead box protein K2"/>
    <property type="match status" value="1"/>
</dbReference>
<dbReference type="Gene3D" id="1.10.10.10">
    <property type="entry name" value="Winged helix-like DNA-binding domain superfamily/Winged helix DNA-binding domain"/>
    <property type="match status" value="1"/>
</dbReference>
<dbReference type="InterPro" id="IPR047512">
    <property type="entry name" value="FH_FOXJ1"/>
</dbReference>
<dbReference type="InterPro" id="IPR001766">
    <property type="entry name" value="Fork_head_dom"/>
</dbReference>
<dbReference type="InterPro" id="IPR047513">
    <property type="entry name" value="FOXJ1"/>
</dbReference>
<dbReference type="InterPro" id="IPR018122">
    <property type="entry name" value="TF_fork_head_CS_1"/>
</dbReference>
<dbReference type="InterPro" id="IPR030456">
    <property type="entry name" value="TF_fork_head_CS_2"/>
</dbReference>
<dbReference type="InterPro" id="IPR036388">
    <property type="entry name" value="WH-like_DNA-bd_sf"/>
</dbReference>
<dbReference type="InterPro" id="IPR036390">
    <property type="entry name" value="WH_DNA-bd_sf"/>
</dbReference>
<dbReference type="PANTHER" id="PTHR46805">
    <property type="entry name" value="FORKHEAD BOX PROTEIN J1"/>
    <property type="match status" value="1"/>
</dbReference>
<dbReference type="PANTHER" id="PTHR46805:SF1">
    <property type="entry name" value="FORKHEAD BOX PROTEIN J1"/>
    <property type="match status" value="1"/>
</dbReference>
<dbReference type="Pfam" id="PF00250">
    <property type="entry name" value="Forkhead"/>
    <property type="match status" value="1"/>
</dbReference>
<dbReference type="PRINTS" id="PR00053">
    <property type="entry name" value="FORKHEAD"/>
</dbReference>
<dbReference type="SMART" id="SM00339">
    <property type="entry name" value="FH"/>
    <property type="match status" value="1"/>
</dbReference>
<dbReference type="SUPFAM" id="SSF46785">
    <property type="entry name" value="Winged helix' DNA-binding domain"/>
    <property type="match status" value="1"/>
</dbReference>
<dbReference type="PROSITE" id="PS00657">
    <property type="entry name" value="FORK_HEAD_1"/>
    <property type="match status" value="1"/>
</dbReference>
<dbReference type="PROSITE" id="PS00658">
    <property type="entry name" value="FORK_HEAD_2"/>
    <property type="match status" value="1"/>
</dbReference>
<dbReference type="PROSITE" id="PS50039">
    <property type="entry name" value="FORK_HEAD_3"/>
    <property type="match status" value="1"/>
</dbReference>
<comment type="function">
    <text evidence="3 4 5 6 7 8 9 10">Transcription factor specifically required for the formation of motile cilia (PubMed:10873152, PubMed:14996907, PubMed:22357932, PubMed:27965440, PubMed:9096351, PubMed:9739041). Acts by activating transcription of genes that mediate assembly of motile cilia, such as CFAP157 (PubMed:27965440). Binds the DNA consensus sequences 5'-HWDTGTTTGTTTA-3' or 5'-KTTTGTTGTTKTW-3' (where H is not G, W is A or T, D is not C, and K is G or T) (PubMed:9096351). Activates the transcription of a variety of ciliary proteins in the developing brain and lung (PubMed:27914912, PubMed:28666954).</text>
</comment>
<comment type="subcellular location">
    <subcellularLocation>
        <location evidence="13">Nucleus</location>
    </subcellularLocation>
</comment>
<comment type="tissue specificity">
    <text evidence="6 8">Predominantly expressed in tissues containing motile cilia.</text>
</comment>
<comment type="developmental stage">
    <text evidence="6 8">Expressed in the developing fetal lung epithelium and developing brain (at protein level).</text>
</comment>
<comment type="disruption phenotype">
    <text evidence="3 10">Mice lack motile respiratory tract cilia and exhibit randomization of the left-right body axis due to loss of motile cilia in the embryonic node (PubMed:10873152, PubMed:9739041). Motile type cilia with a '9 + 2' microtubule ultrastructure are absent in epithelial cells, including those in the airways (PubMed:10873152).</text>
</comment>
<comment type="similarity">
    <text evidence="12">Belongs to the FOXJ1 family.</text>
</comment>
<organism>
    <name type="scientific">Mus musculus</name>
    <name type="common">Mouse</name>
    <dbReference type="NCBI Taxonomy" id="10090"/>
    <lineage>
        <taxon>Eukaryota</taxon>
        <taxon>Metazoa</taxon>
        <taxon>Chordata</taxon>
        <taxon>Craniata</taxon>
        <taxon>Vertebrata</taxon>
        <taxon>Euteleostomi</taxon>
        <taxon>Mammalia</taxon>
        <taxon>Eutheria</taxon>
        <taxon>Euarchontoglires</taxon>
        <taxon>Glires</taxon>
        <taxon>Rodentia</taxon>
        <taxon>Myomorpha</taxon>
        <taxon>Muroidea</taxon>
        <taxon>Muridae</taxon>
        <taxon>Murinae</taxon>
        <taxon>Mus</taxon>
        <taxon>Mus</taxon>
    </lineage>
</organism>
<name>FOXJ1_MOUSE</name>
<proteinExistence type="evidence at protein level"/>
<feature type="chain" id="PRO_0000091851" description="Forkhead box protein J1">
    <location>
        <begin position="1"/>
        <end position="421"/>
    </location>
</feature>
<feature type="DNA-binding region" description="Fork-head" evidence="1">
    <location>
        <begin position="120"/>
        <end position="210"/>
    </location>
</feature>
<feature type="region of interest" description="Disordered" evidence="2">
    <location>
        <begin position="1"/>
        <end position="32"/>
    </location>
</feature>
<feature type="region of interest" description="Disordered" evidence="2">
    <location>
        <begin position="77"/>
        <end position="110"/>
    </location>
</feature>
<feature type="compositionally biased region" description="Gly residues" evidence="2">
    <location>
        <begin position="11"/>
        <end position="21"/>
    </location>
</feature>
<feature type="compositionally biased region" description="Polar residues" evidence="2">
    <location>
        <begin position="90"/>
        <end position="99"/>
    </location>
</feature>
<feature type="sequence conflict" description="In Ref. 1; AAA21689." evidence="12" ref="1">
    <original>KQ</original>
    <variation>NE</variation>
    <location>
        <begin position="275"/>
        <end position="276"/>
    </location>
</feature>
<feature type="sequence conflict" description="In Ref. 1; AAA21689." evidence="12" ref="1">
    <original>A</original>
    <variation>R</variation>
    <location>
        <position position="317"/>
    </location>
</feature>
<evidence type="ECO:0000255" key="1">
    <source>
        <dbReference type="PROSITE-ProRule" id="PRU00089"/>
    </source>
</evidence>
<evidence type="ECO:0000256" key="2">
    <source>
        <dbReference type="SAM" id="MobiDB-lite"/>
    </source>
</evidence>
<evidence type="ECO:0000269" key="3">
    <source>
    </source>
</evidence>
<evidence type="ECO:0000269" key="4">
    <source>
    </source>
</evidence>
<evidence type="ECO:0000269" key="5">
    <source>
    </source>
</evidence>
<evidence type="ECO:0000269" key="6">
    <source>
    </source>
</evidence>
<evidence type="ECO:0000269" key="7">
    <source>
    </source>
</evidence>
<evidence type="ECO:0000269" key="8">
    <source>
    </source>
</evidence>
<evidence type="ECO:0000269" key="9">
    <source>
    </source>
</evidence>
<evidence type="ECO:0000269" key="10">
    <source>
    </source>
</evidence>
<evidence type="ECO:0000303" key="11">
    <source>
    </source>
</evidence>
<evidence type="ECO:0000305" key="12"/>
<evidence type="ECO:0000305" key="13">
    <source>
    </source>
</evidence>
<evidence type="ECO:0000312" key="14">
    <source>
        <dbReference type="MGI" id="MGI:1347474"/>
    </source>
</evidence>
<reference key="1">
    <citation type="journal article" date="1993" name="Proc. Natl. Acad. Sci. U.S.A.">
        <title>Identification of nine tissue-specific transcription factors of the hepatocyte nuclear factor 3/forkhead DNA-binding-domain family.</title>
        <authorList>
            <person name="Clevidence D.E."/>
            <person name="Overdier D.G."/>
            <person name="Tao W."/>
            <person name="Qian X."/>
            <person name="Pani L."/>
            <person name="Lai E."/>
            <person name="Costa R.H."/>
        </authorList>
    </citation>
    <scope>NUCLEOTIDE SEQUENCE [MRNA]</scope>
    <source>
        <strain>C57BL/6 X CBA</strain>
        <tissue>Lung</tissue>
    </source>
</reference>
<reference key="2">
    <citation type="journal article" date="2005" name="Science">
        <title>The transcriptional landscape of the mammalian genome.</title>
        <authorList>
            <person name="Carninci P."/>
            <person name="Kasukawa T."/>
            <person name="Katayama S."/>
            <person name="Gough J."/>
            <person name="Frith M.C."/>
            <person name="Maeda N."/>
            <person name="Oyama R."/>
            <person name="Ravasi T."/>
            <person name="Lenhard B."/>
            <person name="Wells C."/>
            <person name="Kodzius R."/>
            <person name="Shimokawa K."/>
            <person name="Bajic V.B."/>
            <person name="Brenner S.E."/>
            <person name="Batalov S."/>
            <person name="Forrest A.R."/>
            <person name="Zavolan M."/>
            <person name="Davis M.J."/>
            <person name="Wilming L.G."/>
            <person name="Aidinis V."/>
            <person name="Allen J.E."/>
            <person name="Ambesi-Impiombato A."/>
            <person name="Apweiler R."/>
            <person name="Aturaliya R.N."/>
            <person name="Bailey T.L."/>
            <person name="Bansal M."/>
            <person name="Baxter L."/>
            <person name="Beisel K.W."/>
            <person name="Bersano T."/>
            <person name="Bono H."/>
            <person name="Chalk A.M."/>
            <person name="Chiu K.P."/>
            <person name="Choudhary V."/>
            <person name="Christoffels A."/>
            <person name="Clutterbuck D.R."/>
            <person name="Crowe M.L."/>
            <person name="Dalla E."/>
            <person name="Dalrymple B.P."/>
            <person name="de Bono B."/>
            <person name="Della Gatta G."/>
            <person name="di Bernardo D."/>
            <person name="Down T."/>
            <person name="Engstrom P."/>
            <person name="Fagiolini M."/>
            <person name="Faulkner G."/>
            <person name="Fletcher C.F."/>
            <person name="Fukushima T."/>
            <person name="Furuno M."/>
            <person name="Futaki S."/>
            <person name="Gariboldi M."/>
            <person name="Georgii-Hemming P."/>
            <person name="Gingeras T.R."/>
            <person name="Gojobori T."/>
            <person name="Green R.E."/>
            <person name="Gustincich S."/>
            <person name="Harbers M."/>
            <person name="Hayashi Y."/>
            <person name="Hensch T.K."/>
            <person name="Hirokawa N."/>
            <person name="Hill D."/>
            <person name="Huminiecki L."/>
            <person name="Iacono M."/>
            <person name="Ikeo K."/>
            <person name="Iwama A."/>
            <person name="Ishikawa T."/>
            <person name="Jakt M."/>
            <person name="Kanapin A."/>
            <person name="Katoh M."/>
            <person name="Kawasawa Y."/>
            <person name="Kelso J."/>
            <person name="Kitamura H."/>
            <person name="Kitano H."/>
            <person name="Kollias G."/>
            <person name="Krishnan S.P."/>
            <person name="Kruger A."/>
            <person name="Kummerfeld S.K."/>
            <person name="Kurochkin I.V."/>
            <person name="Lareau L.F."/>
            <person name="Lazarevic D."/>
            <person name="Lipovich L."/>
            <person name="Liu J."/>
            <person name="Liuni S."/>
            <person name="McWilliam S."/>
            <person name="Madan Babu M."/>
            <person name="Madera M."/>
            <person name="Marchionni L."/>
            <person name="Matsuda H."/>
            <person name="Matsuzawa S."/>
            <person name="Miki H."/>
            <person name="Mignone F."/>
            <person name="Miyake S."/>
            <person name="Morris K."/>
            <person name="Mottagui-Tabar S."/>
            <person name="Mulder N."/>
            <person name="Nakano N."/>
            <person name="Nakauchi H."/>
            <person name="Ng P."/>
            <person name="Nilsson R."/>
            <person name="Nishiguchi S."/>
            <person name="Nishikawa S."/>
            <person name="Nori F."/>
            <person name="Ohara O."/>
            <person name="Okazaki Y."/>
            <person name="Orlando V."/>
            <person name="Pang K.C."/>
            <person name="Pavan W.J."/>
            <person name="Pavesi G."/>
            <person name="Pesole G."/>
            <person name="Petrovsky N."/>
            <person name="Piazza S."/>
            <person name="Reed J."/>
            <person name="Reid J.F."/>
            <person name="Ring B.Z."/>
            <person name="Ringwald M."/>
            <person name="Rost B."/>
            <person name="Ruan Y."/>
            <person name="Salzberg S.L."/>
            <person name="Sandelin A."/>
            <person name="Schneider C."/>
            <person name="Schoenbach C."/>
            <person name="Sekiguchi K."/>
            <person name="Semple C.A."/>
            <person name="Seno S."/>
            <person name="Sessa L."/>
            <person name="Sheng Y."/>
            <person name="Shibata Y."/>
            <person name="Shimada H."/>
            <person name="Shimada K."/>
            <person name="Silva D."/>
            <person name="Sinclair B."/>
            <person name="Sperling S."/>
            <person name="Stupka E."/>
            <person name="Sugiura K."/>
            <person name="Sultana R."/>
            <person name="Takenaka Y."/>
            <person name="Taki K."/>
            <person name="Tammoja K."/>
            <person name="Tan S.L."/>
            <person name="Tang S."/>
            <person name="Taylor M.S."/>
            <person name="Tegner J."/>
            <person name="Teichmann S.A."/>
            <person name="Ueda H.R."/>
            <person name="van Nimwegen E."/>
            <person name="Verardo R."/>
            <person name="Wei C.L."/>
            <person name="Yagi K."/>
            <person name="Yamanishi H."/>
            <person name="Zabarovsky E."/>
            <person name="Zhu S."/>
            <person name="Zimmer A."/>
            <person name="Hide W."/>
            <person name="Bult C."/>
            <person name="Grimmond S.M."/>
            <person name="Teasdale R.D."/>
            <person name="Liu E.T."/>
            <person name="Brusic V."/>
            <person name="Quackenbush J."/>
            <person name="Wahlestedt C."/>
            <person name="Mattick J.S."/>
            <person name="Hume D.A."/>
            <person name="Kai C."/>
            <person name="Sasaki D."/>
            <person name="Tomaru Y."/>
            <person name="Fukuda S."/>
            <person name="Kanamori-Katayama M."/>
            <person name="Suzuki M."/>
            <person name="Aoki J."/>
            <person name="Arakawa T."/>
            <person name="Iida J."/>
            <person name="Imamura K."/>
            <person name="Itoh M."/>
            <person name="Kato T."/>
            <person name="Kawaji H."/>
            <person name="Kawagashira N."/>
            <person name="Kawashima T."/>
            <person name="Kojima M."/>
            <person name="Kondo S."/>
            <person name="Konno H."/>
            <person name="Nakano K."/>
            <person name="Ninomiya N."/>
            <person name="Nishio T."/>
            <person name="Okada M."/>
            <person name="Plessy C."/>
            <person name="Shibata K."/>
            <person name="Shiraki T."/>
            <person name="Suzuki S."/>
            <person name="Tagami M."/>
            <person name="Waki K."/>
            <person name="Watahiki A."/>
            <person name="Okamura-Oho Y."/>
            <person name="Suzuki H."/>
            <person name="Kawai J."/>
            <person name="Hayashizaki Y."/>
        </authorList>
    </citation>
    <scope>NUCLEOTIDE SEQUENCE [LARGE SCALE MRNA]</scope>
    <source>
        <strain>C57BL/6J</strain>
        <tissue>Head</tissue>
    </source>
</reference>
<reference key="3">
    <citation type="journal article" date="2009" name="PLoS Biol.">
        <title>Lineage-specific biology revealed by a finished genome assembly of the mouse.</title>
        <authorList>
            <person name="Church D.M."/>
            <person name="Goodstadt L."/>
            <person name="Hillier L.W."/>
            <person name="Zody M.C."/>
            <person name="Goldstein S."/>
            <person name="She X."/>
            <person name="Bult C.J."/>
            <person name="Agarwala R."/>
            <person name="Cherry J.L."/>
            <person name="DiCuccio M."/>
            <person name="Hlavina W."/>
            <person name="Kapustin Y."/>
            <person name="Meric P."/>
            <person name="Maglott D."/>
            <person name="Birtle Z."/>
            <person name="Marques A.C."/>
            <person name="Graves T."/>
            <person name="Zhou S."/>
            <person name="Teague B."/>
            <person name="Potamousis K."/>
            <person name="Churas C."/>
            <person name="Place M."/>
            <person name="Herschleb J."/>
            <person name="Runnheim R."/>
            <person name="Forrest D."/>
            <person name="Amos-Landgraf J."/>
            <person name="Schwartz D.C."/>
            <person name="Cheng Z."/>
            <person name="Lindblad-Toh K."/>
            <person name="Eichler E.E."/>
            <person name="Ponting C.P."/>
        </authorList>
    </citation>
    <scope>NUCLEOTIDE SEQUENCE [LARGE SCALE GENOMIC DNA]</scope>
    <source>
        <strain>C57BL/6J</strain>
    </source>
</reference>
<reference key="4">
    <citation type="submission" date="2005-07" db="EMBL/GenBank/DDBJ databases">
        <authorList>
            <person name="Mural R.J."/>
            <person name="Adams M.D."/>
            <person name="Myers E.W."/>
            <person name="Smith H.O."/>
            <person name="Venter J.C."/>
        </authorList>
    </citation>
    <scope>NUCLEOTIDE SEQUENCE [LARGE SCALE GENOMIC DNA]</scope>
</reference>
<reference key="5">
    <citation type="journal article" date="1997" name="Proc. Natl. Acad. Sci. U.S.A.">
        <title>The winged helix transcription factor HFH-4 is expressed during choroid plexus epithelial development in the mouse embryo.</title>
        <authorList>
            <person name="Lim L."/>
            <person name="Zhou H."/>
            <person name="Costa R.H."/>
        </authorList>
    </citation>
    <scope>FUNCTION</scope>
    <scope>SUBCELLULAR LOCATION</scope>
</reference>
<reference key="6">
    <citation type="journal article" date="1998" name="J. Clin. Invest.">
        <title>Mutation of the mouse hepatocyte nuclear factor/forkhead homologue 4 gene results in an absence of cilia and random left-right asymmetry.</title>
        <authorList>
            <person name="Chen J."/>
            <person name="Knowles H.J."/>
            <person name="Hebert J.L."/>
            <person name="Hackett B.P."/>
        </authorList>
    </citation>
    <scope>FUNCTION</scope>
    <scope>DISRUPTION PHENOTYPE</scope>
</reference>
<reference key="7">
    <citation type="journal article" date="2000" name="Am. J. Respir. Cell Mol. Biol.">
        <title>Ciliogenesis and left-right axis defects in forkhead factor HFH-4-null mice.</title>
        <authorList>
            <person name="Brody S.L."/>
            <person name="Yan X.H."/>
            <person name="Wuerffel M.K."/>
            <person name="Song S.K."/>
            <person name="Shapiro S.D."/>
        </authorList>
    </citation>
    <scope>FUNCTION</scope>
    <scope>DISRUPTION PHENOTYPE</scope>
</reference>
<reference key="8">
    <citation type="journal article" date="2004" name="J. Cell Sci.">
        <title>Foxj1 regulates basal body anchoring to the cytoskeleton of ciliated pulmonary epithelial cells.</title>
        <authorList>
            <person name="Gomperts B.N."/>
            <person name="Gong-Cooper X."/>
            <person name="Hackett B.P."/>
        </authorList>
    </citation>
    <scope>FUNCTION</scope>
</reference>
<reference key="9">
    <citation type="journal article" date="2012" name="Development">
        <title>Differential regulation of node formation, nodal ciliogenesis and cilia positioning by Noto and Foxj1.</title>
        <authorList>
            <person name="Alten L."/>
            <person name="Schuster-Gossler K."/>
            <person name="Beckers A."/>
            <person name="Groos S."/>
            <person name="Ulmer B."/>
            <person name="Hegermann J."/>
            <person name="Ochs M."/>
            <person name="Gossler A."/>
        </authorList>
    </citation>
    <scope>FUNCTION</scope>
</reference>
<reference key="10">
    <citation type="journal article" date="2016" name="Development">
        <title>CFAP157 is a murine downstream effector of FOXJ1 that is specifically required for flagellum morphogenesis and sperm motility.</title>
        <authorList>
            <person name="Weidemann M."/>
            <person name="Schuster-Gossler K."/>
            <person name="Stauber M."/>
            <person name="Wrede C."/>
            <person name="Hegermann J."/>
            <person name="Ott T."/>
            <person name="Boldt K."/>
            <person name="Beyer T."/>
            <person name="Serth K."/>
            <person name="Kremmer E."/>
            <person name="Blum M."/>
            <person name="Ueffing M."/>
            <person name="Gossler A."/>
        </authorList>
    </citation>
    <scope>FUNCTION</scope>
</reference>
<reference key="11">
    <citation type="journal article" date="2017" name="Dev. Biol.">
        <title>Identification of FOXJ1 effectors during ciliogenesis in the foetal respiratory epithelium and embryonic left-right organiser of the mouse.</title>
        <authorList>
            <person name="Stauber M."/>
            <person name="Weidemann M."/>
            <person name="Dittrich-Breiholz O."/>
            <person name="Lobschat K."/>
            <person name="Alten L."/>
            <person name="Mai M."/>
            <person name="Beckers A."/>
            <person name="Kracht M."/>
            <person name="Gossler A."/>
        </authorList>
    </citation>
    <scope>FUNCTION</scope>
    <scope>TISSUE SPECIFICITY</scope>
    <scope>DEVELOPMENTAL STAGE</scope>
</reference>
<reference key="12">
    <citation type="journal article" date="2017" name="Dev. Biol.">
        <title>1700012B09Rik, a FOXJ1 effector gene active in ciliated tissues of the mouse but not essential for motile ciliogenesis.</title>
        <authorList>
            <person name="Stauber M."/>
            <person name="Boldt K."/>
            <person name="Wrede C."/>
            <person name="Weidemann M."/>
            <person name="Kellner M."/>
            <person name="Schuster-Gossler K."/>
            <person name="Kuehnel M.P."/>
            <person name="Hegermann J."/>
            <person name="Ueffing M."/>
            <person name="Gossler A."/>
        </authorList>
    </citation>
    <scope>FUNCTION</scope>
    <scope>TISSUE SPECIFICITY</scope>
    <scope>DEVELOPMENTAL STAGE</scope>
</reference>